<sequence>GHVPCGKDGRKCGYHADCCNCCLSGICKPSTSWTGCSTSTVQLTR</sequence>
<accession>Q7Z0A5</accession>
<name>I1BU_CONRA</name>
<feature type="chain" id="PRO_0000035104" description="Iota-conotoxin-like R11.10">
    <location>
        <begin position="1" status="less than"/>
        <end position="44"/>
    </location>
</feature>
<feature type="propeptide" id="PRO_0000035105" description="Removed by a carboxypeptidase" evidence="1">
    <location>
        <position position="45"/>
    </location>
</feature>
<feature type="modified residue" description="D-leucine" evidence="1">
    <location>
        <position position="43"/>
    </location>
</feature>
<feature type="disulfide bond" evidence="2">
    <location>
        <begin position="5"/>
        <end position="19"/>
    </location>
</feature>
<feature type="disulfide bond" evidence="2">
    <location>
        <begin position="12"/>
        <end position="22"/>
    </location>
</feature>
<feature type="disulfide bond" evidence="2">
    <location>
        <begin position="18"/>
        <end position="27"/>
    </location>
</feature>
<feature type="disulfide bond" evidence="2">
    <location>
        <begin position="21"/>
        <end position="36"/>
    </location>
</feature>
<feature type="non-terminal residue">
    <location>
        <position position="1"/>
    </location>
</feature>
<comment type="function">
    <text evidence="1">Iota-conotoxins bind to voltage-gated sodium channels (Nav) and act as agonists by shifting the voltage-dependence of activation to more hyperpolarized levels. Produces general excitatory symptoms (By similarity).</text>
</comment>
<comment type="subcellular location">
    <subcellularLocation>
        <location evidence="1">Secreted</location>
    </subcellularLocation>
</comment>
<comment type="tissue specificity">
    <text>Expressed by the venom duct.</text>
</comment>
<comment type="domain">
    <text>The cysteine framework is XI (C-C-CC-CC-C-C).</text>
</comment>
<comment type="similarity">
    <text evidence="3">Belongs to the conotoxin I1 superfamily.</text>
</comment>
<dbReference type="EMBL" id="AY208948">
    <property type="protein sequence ID" value="AAP41530.1"/>
    <property type="molecule type" value="mRNA"/>
</dbReference>
<dbReference type="SMR" id="Q7Z0A5"/>
<dbReference type="ConoServer" id="829">
    <property type="toxin name" value="R11.10"/>
</dbReference>
<dbReference type="GO" id="GO:0005576">
    <property type="term" value="C:extracellular region"/>
    <property type="evidence" value="ECO:0007669"/>
    <property type="project" value="UniProtKB-SubCell"/>
</dbReference>
<dbReference type="GO" id="GO:0017080">
    <property type="term" value="F:sodium channel regulator activity"/>
    <property type="evidence" value="ECO:0007669"/>
    <property type="project" value="UniProtKB-KW"/>
</dbReference>
<dbReference type="GO" id="GO:0090729">
    <property type="term" value="F:toxin activity"/>
    <property type="evidence" value="ECO:0007669"/>
    <property type="project" value="UniProtKB-KW"/>
</dbReference>
<dbReference type="Gene3D" id="4.10.40.80">
    <property type="match status" value="1"/>
</dbReference>
<dbReference type="InterPro" id="IPR013141">
    <property type="entry name" value="Conotoxin-I_CS"/>
</dbReference>
<dbReference type="InterPro" id="IPR012624">
    <property type="entry name" value="Toxin_19"/>
</dbReference>
<dbReference type="Pfam" id="PF08088">
    <property type="entry name" value="Toxin_19"/>
    <property type="match status" value="1"/>
</dbReference>
<dbReference type="PROSITE" id="PS60019">
    <property type="entry name" value="I_CONOTOXIN"/>
    <property type="match status" value="1"/>
</dbReference>
<evidence type="ECO:0000250" key="1"/>
<evidence type="ECO:0000250" key="2">
    <source>
        <dbReference type="UniProtKB" id="Q7Z094"/>
    </source>
</evidence>
<evidence type="ECO:0000305" key="3"/>
<reference key="1">
    <citation type="journal article" date="2003" name="J. Neurochem.">
        <title>Novel excitatory Conus peptides define a new conotoxin superfamily.</title>
        <authorList>
            <person name="Jimenez E.C."/>
            <person name="Shetty R.P."/>
            <person name="Lirazan M."/>
            <person name="Rivier J."/>
            <person name="Walker C."/>
            <person name="Abogadie F.C."/>
            <person name="Yoshikami D."/>
            <person name="Cruz L.J."/>
            <person name="Olivera B.M."/>
        </authorList>
    </citation>
    <scope>NUCLEOTIDE SEQUENCE [MRNA]</scope>
    <source>
        <tissue>Venom duct</tissue>
    </source>
</reference>
<organism>
    <name type="scientific">Conus radiatus</name>
    <name type="common">Rayed cone</name>
    <dbReference type="NCBI Taxonomy" id="61198"/>
    <lineage>
        <taxon>Eukaryota</taxon>
        <taxon>Metazoa</taxon>
        <taxon>Spiralia</taxon>
        <taxon>Lophotrochozoa</taxon>
        <taxon>Mollusca</taxon>
        <taxon>Gastropoda</taxon>
        <taxon>Caenogastropoda</taxon>
        <taxon>Neogastropoda</taxon>
        <taxon>Conoidea</taxon>
        <taxon>Conidae</taxon>
        <taxon>Conus</taxon>
        <taxon>Phasmoconus</taxon>
    </lineage>
</organism>
<protein>
    <recommendedName>
        <fullName>Iota-conotoxin-like R11.10</fullName>
    </recommendedName>
</protein>
<proteinExistence type="evidence at transcript level"/>
<keyword id="KW-0208">D-amino acid</keyword>
<keyword id="KW-1015">Disulfide bond</keyword>
<keyword id="KW-0872">Ion channel impairing toxin</keyword>
<keyword id="KW-0528">Neurotoxin</keyword>
<keyword id="KW-0964">Secreted</keyword>
<keyword id="KW-0800">Toxin</keyword>
<keyword id="KW-0738">Voltage-gated sodium channel impairing toxin</keyword>